<reference key="1">
    <citation type="journal article" date="2004" name="Proc. Natl. Acad. Sci. U.S.A.">
        <title>Genome sequence of the enterobacterial phytopathogen Erwinia carotovora subsp. atroseptica and characterization of virulence factors.</title>
        <authorList>
            <person name="Bell K.S."/>
            <person name="Sebaihia M."/>
            <person name="Pritchard L."/>
            <person name="Holden M.T.G."/>
            <person name="Hyman L.J."/>
            <person name="Holeva M.C."/>
            <person name="Thomson N.R."/>
            <person name="Bentley S.D."/>
            <person name="Churcher L.J.C."/>
            <person name="Mungall K."/>
            <person name="Atkin R."/>
            <person name="Bason N."/>
            <person name="Brooks K."/>
            <person name="Chillingworth T."/>
            <person name="Clark K."/>
            <person name="Doggett J."/>
            <person name="Fraser A."/>
            <person name="Hance Z."/>
            <person name="Hauser H."/>
            <person name="Jagels K."/>
            <person name="Moule S."/>
            <person name="Norbertczak H."/>
            <person name="Ormond D."/>
            <person name="Price C."/>
            <person name="Quail M.A."/>
            <person name="Sanders M."/>
            <person name="Walker D."/>
            <person name="Whitehead S."/>
            <person name="Salmond G.P.C."/>
            <person name="Birch P.R.J."/>
            <person name="Parkhill J."/>
            <person name="Toth I.K."/>
        </authorList>
    </citation>
    <scope>NUCLEOTIDE SEQUENCE [LARGE SCALE GENOMIC DNA]</scope>
    <source>
        <strain>SCRI 1043 / ATCC BAA-672</strain>
    </source>
</reference>
<keyword id="KW-0143">Chaperone</keyword>
<keyword id="KW-0963">Cytoplasm</keyword>
<keyword id="KW-0653">Protein transport</keyword>
<keyword id="KW-1185">Reference proteome</keyword>
<keyword id="KW-0811">Translocation</keyword>
<keyword id="KW-0813">Transport</keyword>
<name>SECB_PECAS</name>
<comment type="function">
    <text evidence="1">One of the proteins required for the normal export of preproteins out of the cell cytoplasm. It is a molecular chaperone that binds to a subset of precursor proteins, maintaining them in a translocation-competent state. It also specifically binds to its receptor SecA.</text>
</comment>
<comment type="subunit">
    <text evidence="1">Homotetramer, a dimer of dimers. One homotetramer interacts with 1 SecA dimer.</text>
</comment>
<comment type="subcellular location">
    <subcellularLocation>
        <location evidence="1">Cytoplasm</location>
    </subcellularLocation>
</comment>
<comment type="similarity">
    <text evidence="1">Belongs to the SecB family.</text>
</comment>
<dbReference type="EMBL" id="BX950851">
    <property type="protein sequence ID" value="CAG73091.1"/>
    <property type="molecule type" value="Genomic_DNA"/>
</dbReference>
<dbReference type="RefSeq" id="WP_011091811.1">
    <property type="nucleotide sequence ID" value="NC_004547.2"/>
</dbReference>
<dbReference type="SMR" id="Q6DAT1"/>
<dbReference type="STRING" id="218491.ECA0172"/>
<dbReference type="KEGG" id="eca:ECA0172"/>
<dbReference type="eggNOG" id="COG1952">
    <property type="taxonomic scope" value="Bacteria"/>
</dbReference>
<dbReference type="HOGENOM" id="CLU_111574_1_0_6"/>
<dbReference type="OrthoDB" id="9795145at2"/>
<dbReference type="Proteomes" id="UP000007966">
    <property type="component" value="Chromosome"/>
</dbReference>
<dbReference type="GO" id="GO:0005737">
    <property type="term" value="C:cytoplasm"/>
    <property type="evidence" value="ECO:0007669"/>
    <property type="project" value="UniProtKB-SubCell"/>
</dbReference>
<dbReference type="GO" id="GO:0051082">
    <property type="term" value="F:unfolded protein binding"/>
    <property type="evidence" value="ECO:0007669"/>
    <property type="project" value="InterPro"/>
</dbReference>
<dbReference type="GO" id="GO:0006457">
    <property type="term" value="P:protein folding"/>
    <property type="evidence" value="ECO:0007669"/>
    <property type="project" value="UniProtKB-UniRule"/>
</dbReference>
<dbReference type="GO" id="GO:0051262">
    <property type="term" value="P:protein tetramerization"/>
    <property type="evidence" value="ECO:0007669"/>
    <property type="project" value="InterPro"/>
</dbReference>
<dbReference type="GO" id="GO:0015031">
    <property type="term" value="P:protein transport"/>
    <property type="evidence" value="ECO:0007669"/>
    <property type="project" value="UniProtKB-UniRule"/>
</dbReference>
<dbReference type="CDD" id="cd00557">
    <property type="entry name" value="Translocase_SecB"/>
    <property type="match status" value="1"/>
</dbReference>
<dbReference type="FunFam" id="3.10.420.10:FF:000001">
    <property type="entry name" value="Protein-export chaperone SecB"/>
    <property type="match status" value="1"/>
</dbReference>
<dbReference type="Gene3D" id="3.10.420.10">
    <property type="entry name" value="SecB-like"/>
    <property type="match status" value="1"/>
</dbReference>
<dbReference type="HAMAP" id="MF_00821">
    <property type="entry name" value="SecB"/>
    <property type="match status" value="1"/>
</dbReference>
<dbReference type="InterPro" id="IPR003708">
    <property type="entry name" value="SecB"/>
</dbReference>
<dbReference type="InterPro" id="IPR035958">
    <property type="entry name" value="SecB-like_sf"/>
</dbReference>
<dbReference type="NCBIfam" id="NF004390">
    <property type="entry name" value="PRK05751.1-1"/>
    <property type="match status" value="1"/>
</dbReference>
<dbReference type="NCBIfam" id="NF004393">
    <property type="entry name" value="PRK05751.1-4"/>
    <property type="match status" value="1"/>
</dbReference>
<dbReference type="NCBIfam" id="TIGR00809">
    <property type="entry name" value="secB"/>
    <property type="match status" value="1"/>
</dbReference>
<dbReference type="PANTHER" id="PTHR36918">
    <property type="match status" value="1"/>
</dbReference>
<dbReference type="PANTHER" id="PTHR36918:SF1">
    <property type="entry name" value="PROTEIN-EXPORT PROTEIN SECB"/>
    <property type="match status" value="1"/>
</dbReference>
<dbReference type="Pfam" id="PF02556">
    <property type="entry name" value="SecB"/>
    <property type="match status" value="1"/>
</dbReference>
<dbReference type="PRINTS" id="PR01594">
    <property type="entry name" value="SECBCHAPRONE"/>
</dbReference>
<dbReference type="SUPFAM" id="SSF54611">
    <property type="entry name" value="SecB-like"/>
    <property type="match status" value="1"/>
</dbReference>
<sequence length="158" mass="17487">MSEQNNTEMAFQIQRIYTKDISFEAPKAPQVFQQEWQPEVKLDLDTASSQLADDIYEVVLRVTVTASLGEETAFLCEVQQGGIFTVGGIEGTQLAHCLGAYCPNILFPYARECITSLVSRGTFPQLNLAPVNFDALFMNYLQQQTEGEGEGAAQHQDA</sequence>
<accession>Q6DAT1</accession>
<protein>
    <recommendedName>
        <fullName evidence="1">Protein-export protein SecB</fullName>
    </recommendedName>
</protein>
<evidence type="ECO:0000255" key="1">
    <source>
        <dbReference type="HAMAP-Rule" id="MF_00821"/>
    </source>
</evidence>
<gene>
    <name evidence="1" type="primary">secB</name>
    <name type="ordered locus">ECA0172</name>
</gene>
<proteinExistence type="inferred from homology"/>
<organism>
    <name type="scientific">Pectobacterium atrosepticum (strain SCRI 1043 / ATCC BAA-672)</name>
    <name type="common">Erwinia carotovora subsp. atroseptica</name>
    <dbReference type="NCBI Taxonomy" id="218491"/>
    <lineage>
        <taxon>Bacteria</taxon>
        <taxon>Pseudomonadati</taxon>
        <taxon>Pseudomonadota</taxon>
        <taxon>Gammaproteobacteria</taxon>
        <taxon>Enterobacterales</taxon>
        <taxon>Pectobacteriaceae</taxon>
        <taxon>Pectobacterium</taxon>
    </lineage>
</organism>
<feature type="chain" id="PRO_0000055369" description="Protein-export protein SecB">
    <location>
        <begin position="1"/>
        <end position="158"/>
    </location>
</feature>